<protein>
    <recommendedName>
        <fullName evidence="1">Large ribosomal subunit protein bL17</fullName>
    </recommendedName>
    <alternativeName>
        <fullName evidence="3">50S ribosomal protein L17</fullName>
    </alternativeName>
</protein>
<gene>
    <name evidence="1" type="primary">rplQ</name>
    <name type="ordered locus">BF4154</name>
</gene>
<keyword id="KW-0687">Ribonucleoprotein</keyword>
<keyword id="KW-0689">Ribosomal protein</keyword>
<sequence length="161" mass="18033">MRHNKKFNHLGRTASHRSAMLSNMACSLIKHKRITTTVAKAKALKKFVEPLITKSKEDTTNSRRVVFSNLQDKLAVTELFKEISVKIADRPGGYTRIIKTGNRLGDNAEMCFIELVDYNENMAKEKVAKKATRTRRSKKTTEAAPAAEVPATEEPKAESAE</sequence>
<dbReference type="EMBL" id="AP006841">
    <property type="protein sequence ID" value="BAD50896.1"/>
    <property type="molecule type" value="Genomic_DNA"/>
</dbReference>
<dbReference type="RefSeq" id="WP_005791577.1">
    <property type="nucleotide sequence ID" value="NZ_UYXF01000007.1"/>
</dbReference>
<dbReference type="RefSeq" id="YP_101430.1">
    <property type="nucleotide sequence ID" value="NC_006347.1"/>
</dbReference>
<dbReference type="SMR" id="Q64NN6"/>
<dbReference type="STRING" id="295405.BF4154"/>
<dbReference type="GeneID" id="60369268"/>
<dbReference type="KEGG" id="bfr:BF4154"/>
<dbReference type="PATRIC" id="fig|295405.11.peg.4007"/>
<dbReference type="HOGENOM" id="CLU_074407_0_1_10"/>
<dbReference type="OrthoDB" id="9809073at2"/>
<dbReference type="Proteomes" id="UP000002197">
    <property type="component" value="Chromosome"/>
</dbReference>
<dbReference type="GO" id="GO:0022625">
    <property type="term" value="C:cytosolic large ribosomal subunit"/>
    <property type="evidence" value="ECO:0007669"/>
    <property type="project" value="TreeGrafter"/>
</dbReference>
<dbReference type="GO" id="GO:0003735">
    <property type="term" value="F:structural constituent of ribosome"/>
    <property type="evidence" value="ECO:0007669"/>
    <property type="project" value="InterPro"/>
</dbReference>
<dbReference type="GO" id="GO:0006412">
    <property type="term" value="P:translation"/>
    <property type="evidence" value="ECO:0007669"/>
    <property type="project" value="UniProtKB-UniRule"/>
</dbReference>
<dbReference type="FunFam" id="3.90.1030.10:FF:000006">
    <property type="entry name" value="50S ribosomal protein L17"/>
    <property type="match status" value="1"/>
</dbReference>
<dbReference type="Gene3D" id="3.90.1030.10">
    <property type="entry name" value="Ribosomal protein L17"/>
    <property type="match status" value="1"/>
</dbReference>
<dbReference type="HAMAP" id="MF_01368">
    <property type="entry name" value="Ribosomal_bL17"/>
    <property type="match status" value="1"/>
</dbReference>
<dbReference type="InterPro" id="IPR000456">
    <property type="entry name" value="Ribosomal_bL17"/>
</dbReference>
<dbReference type="InterPro" id="IPR047859">
    <property type="entry name" value="Ribosomal_bL17_CS"/>
</dbReference>
<dbReference type="InterPro" id="IPR036373">
    <property type="entry name" value="Ribosomal_bL17_sf"/>
</dbReference>
<dbReference type="NCBIfam" id="TIGR00059">
    <property type="entry name" value="L17"/>
    <property type="match status" value="1"/>
</dbReference>
<dbReference type="PANTHER" id="PTHR14413:SF16">
    <property type="entry name" value="LARGE RIBOSOMAL SUBUNIT PROTEIN BL17M"/>
    <property type="match status" value="1"/>
</dbReference>
<dbReference type="PANTHER" id="PTHR14413">
    <property type="entry name" value="RIBOSOMAL PROTEIN L17"/>
    <property type="match status" value="1"/>
</dbReference>
<dbReference type="Pfam" id="PF01196">
    <property type="entry name" value="Ribosomal_L17"/>
    <property type="match status" value="1"/>
</dbReference>
<dbReference type="SUPFAM" id="SSF64263">
    <property type="entry name" value="Prokaryotic ribosomal protein L17"/>
    <property type="match status" value="1"/>
</dbReference>
<dbReference type="PROSITE" id="PS01167">
    <property type="entry name" value="RIBOSOMAL_L17"/>
    <property type="match status" value="1"/>
</dbReference>
<name>RL17_BACFR</name>
<accession>Q64NN6</accession>
<comment type="subunit">
    <text evidence="1">Part of the 50S ribosomal subunit. Contacts protein L32.</text>
</comment>
<comment type="similarity">
    <text evidence="1">Belongs to the bacterial ribosomal protein bL17 family.</text>
</comment>
<organism>
    <name type="scientific">Bacteroides fragilis (strain YCH46)</name>
    <dbReference type="NCBI Taxonomy" id="295405"/>
    <lineage>
        <taxon>Bacteria</taxon>
        <taxon>Pseudomonadati</taxon>
        <taxon>Bacteroidota</taxon>
        <taxon>Bacteroidia</taxon>
        <taxon>Bacteroidales</taxon>
        <taxon>Bacteroidaceae</taxon>
        <taxon>Bacteroides</taxon>
    </lineage>
</organism>
<reference key="1">
    <citation type="journal article" date="2004" name="Proc. Natl. Acad. Sci. U.S.A.">
        <title>Genomic analysis of Bacteroides fragilis reveals extensive DNA inversions regulating cell surface adaptation.</title>
        <authorList>
            <person name="Kuwahara T."/>
            <person name="Yamashita A."/>
            <person name="Hirakawa H."/>
            <person name="Nakayama H."/>
            <person name="Toh H."/>
            <person name="Okada N."/>
            <person name="Kuhara S."/>
            <person name="Hattori M."/>
            <person name="Hayashi T."/>
            <person name="Ohnishi Y."/>
        </authorList>
    </citation>
    <scope>NUCLEOTIDE SEQUENCE [LARGE SCALE GENOMIC DNA]</scope>
    <source>
        <strain>YCH46</strain>
    </source>
</reference>
<proteinExistence type="inferred from homology"/>
<feature type="chain" id="PRO_0000267828" description="Large ribosomal subunit protein bL17">
    <location>
        <begin position="1"/>
        <end position="161"/>
    </location>
</feature>
<feature type="region of interest" description="Disordered" evidence="2">
    <location>
        <begin position="126"/>
        <end position="161"/>
    </location>
</feature>
<feature type="compositionally biased region" description="Basic residues" evidence="2">
    <location>
        <begin position="129"/>
        <end position="138"/>
    </location>
</feature>
<feature type="compositionally biased region" description="Low complexity" evidence="2">
    <location>
        <begin position="142"/>
        <end position="152"/>
    </location>
</feature>
<evidence type="ECO:0000255" key="1">
    <source>
        <dbReference type="HAMAP-Rule" id="MF_01368"/>
    </source>
</evidence>
<evidence type="ECO:0000256" key="2">
    <source>
        <dbReference type="SAM" id="MobiDB-lite"/>
    </source>
</evidence>
<evidence type="ECO:0000305" key="3"/>